<dbReference type="EC" id="2.7.1.105"/>
<dbReference type="EC" id="3.1.3.46"/>
<dbReference type="EMBL" id="AF190739">
    <property type="protein sequence ID" value="AAF04293.2"/>
    <property type="molecule type" value="mRNA"/>
</dbReference>
<dbReference type="EMBL" id="AF242859">
    <property type="protein sequence ID" value="AAF76986.1"/>
    <property type="status" value="ALT_FRAME"/>
    <property type="molecule type" value="Genomic_DNA"/>
</dbReference>
<dbReference type="EMBL" id="AB035288">
    <property type="protein sequence ID" value="BAA96353.1"/>
    <property type="molecule type" value="mRNA"/>
</dbReference>
<dbReference type="EMBL" id="AC067971">
    <property type="protein sequence ID" value="AAF82210.1"/>
    <property type="status" value="ALT_SEQ"/>
    <property type="molecule type" value="Genomic_DNA"/>
</dbReference>
<dbReference type="EMBL" id="CP002684">
    <property type="protein sequence ID" value="AEE28077.1"/>
    <property type="molecule type" value="Genomic_DNA"/>
</dbReference>
<dbReference type="EMBL" id="AY128346">
    <property type="protein sequence ID" value="AAM91549.1"/>
    <property type="molecule type" value="mRNA"/>
</dbReference>
<dbReference type="PIR" id="H86205">
    <property type="entry name" value="H86205"/>
</dbReference>
<dbReference type="RefSeq" id="NP_172191.1">
    <property type="nucleotide sequence ID" value="NM_100584.5"/>
</dbReference>
<dbReference type="SMR" id="Q9MB58"/>
<dbReference type="BioGRID" id="22462">
    <property type="interactions" value="1"/>
</dbReference>
<dbReference type="FunCoup" id="Q9MB58">
    <property type="interactions" value="2971"/>
</dbReference>
<dbReference type="STRING" id="3702.Q9MB58"/>
<dbReference type="iPTMnet" id="Q9MB58"/>
<dbReference type="PaxDb" id="3702-AT1G07110.1"/>
<dbReference type="ProMEX" id="Q9MB58"/>
<dbReference type="ProteomicsDB" id="222358"/>
<dbReference type="EnsemblPlants" id="AT1G07110.1">
    <property type="protein sequence ID" value="AT1G07110.1"/>
    <property type="gene ID" value="AT1G07110"/>
</dbReference>
<dbReference type="GeneID" id="837221"/>
<dbReference type="Gramene" id="AT1G07110.1">
    <property type="protein sequence ID" value="AT1G07110.1"/>
    <property type="gene ID" value="AT1G07110"/>
</dbReference>
<dbReference type="KEGG" id="ath:AT1G07110"/>
<dbReference type="Araport" id="AT1G07110"/>
<dbReference type="TAIR" id="AT1G07110">
    <property type="gene designation" value="F2KP"/>
</dbReference>
<dbReference type="eggNOG" id="KOG0234">
    <property type="taxonomic scope" value="Eukaryota"/>
</dbReference>
<dbReference type="HOGENOM" id="CLU_025830_0_0_1"/>
<dbReference type="InParanoid" id="Q9MB58"/>
<dbReference type="OMA" id="NLDHAGG"/>
<dbReference type="OrthoDB" id="267323at2759"/>
<dbReference type="PhylomeDB" id="Q9MB58"/>
<dbReference type="BioCyc" id="ARA:AT1G07110-MONOMER"/>
<dbReference type="BRENDA" id="2.7.1.105">
    <property type="organism ID" value="399"/>
</dbReference>
<dbReference type="BRENDA" id="3.1.3.46">
    <property type="organism ID" value="399"/>
</dbReference>
<dbReference type="PRO" id="PR:Q9MB58"/>
<dbReference type="Proteomes" id="UP000006548">
    <property type="component" value="Chromosome 1"/>
</dbReference>
<dbReference type="ExpressionAtlas" id="Q9MB58">
    <property type="expression patterns" value="baseline and differential"/>
</dbReference>
<dbReference type="GO" id="GO:0005737">
    <property type="term" value="C:cytoplasm"/>
    <property type="evidence" value="ECO:0007669"/>
    <property type="project" value="UniProtKB-SubCell"/>
</dbReference>
<dbReference type="GO" id="GO:0016020">
    <property type="term" value="C:membrane"/>
    <property type="evidence" value="ECO:0007669"/>
    <property type="project" value="UniProtKB-SubCell"/>
</dbReference>
<dbReference type="GO" id="GO:0003873">
    <property type="term" value="F:6-phosphofructo-2-kinase activity"/>
    <property type="evidence" value="ECO:0007669"/>
    <property type="project" value="UniProtKB-EC"/>
</dbReference>
<dbReference type="GO" id="GO:0005524">
    <property type="term" value="F:ATP binding"/>
    <property type="evidence" value="ECO:0007669"/>
    <property type="project" value="UniProtKB-KW"/>
</dbReference>
<dbReference type="GO" id="GO:0004331">
    <property type="term" value="F:fructose-2,6-bisphosphate 2-phosphatase activity"/>
    <property type="evidence" value="ECO:0007669"/>
    <property type="project" value="UniProtKB-EC"/>
</dbReference>
<dbReference type="GO" id="GO:2001070">
    <property type="term" value="F:starch binding"/>
    <property type="evidence" value="ECO:0007669"/>
    <property type="project" value="InterPro"/>
</dbReference>
<dbReference type="GO" id="GO:0006003">
    <property type="term" value="P:fructose 2,6-bisphosphate metabolic process"/>
    <property type="evidence" value="ECO:0000314"/>
    <property type="project" value="UniProtKB"/>
</dbReference>
<dbReference type="GO" id="GO:0006002">
    <property type="term" value="P:fructose 6-phosphate metabolic process"/>
    <property type="evidence" value="ECO:0000314"/>
    <property type="project" value="UniProtKB"/>
</dbReference>
<dbReference type="GO" id="GO:0006000">
    <property type="term" value="P:fructose metabolic process"/>
    <property type="evidence" value="ECO:0000314"/>
    <property type="project" value="UniProtKB"/>
</dbReference>
<dbReference type="GO" id="GO:0043609">
    <property type="term" value="P:regulation of carbon utilization"/>
    <property type="evidence" value="ECO:0000315"/>
    <property type="project" value="UniProtKB"/>
</dbReference>
<dbReference type="CDD" id="cd07067">
    <property type="entry name" value="HP_PGM_like"/>
    <property type="match status" value="1"/>
</dbReference>
<dbReference type="FunFam" id="3.40.50.1240:FF:000006">
    <property type="entry name" value="6-phosphofructo-2-kinase/fructose-2, 6-bisphosphatase"/>
    <property type="match status" value="1"/>
</dbReference>
<dbReference type="FunFam" id="3.40.50.300:FF:000570">
    <property type="entry name" value="6-phosphofructo-2-kinase/fructose-2, 6-bisphosphatase-like isoform X1"/>
    <property type="match status" value="1"/>
</dbReference>
<dbReference type="FunFam" id="2.60.40.10:FF:000740">
    <property type="entry name" value="6-phosphofructo-2-kinase/fructose-2,6-bisphosphatase"/>
    <property type="match status" value="1"/>
</dbReference>
<dbReference type="Gene3D" id="2.60.40.10">
    <property type="entry name" value="Immunoglobulins"/>
    <property type="match status" value="1"/>
</dbReference>
<dbReference type="Gene3D" id="3.40.50.300">
    <property type="entry name" value="P-loop containing nucleotide triphosphate hydrolases"/>
    <property type="match status" value="1"/>
</dbReference>
<dbReference type="Gene3D" id="3.40.50.1240">
    <property type="entry name" value="Phosphoglycerate mutase-like"/>
    <property type="match status" value="1"/>
</dbReference>
<dbReference type="InterPro" id="IPR003094">
    <property type="entry name" value="6Pfruct_kin"/>
</dbReference>
<dbReference type="InterPro" id="IPR013079">
    <property type="entry name" value="6Phosfructo_kin"/>
</dbReference>
<dbReference type="InterPro" id="IPR013784">
    <property type="entry name" value="Carb-bd-like_fold"/>
</dbReference>
<dbReference type="InterPro" id="IPR002044">
    <property type="entry name" value="CBM20"/>
</dbReference>
<dbReference type="InterPro" id="IPR013078">
    <property type="entry name" value="His_Pase_superF_clade-1"/>
</dbReference>
<dbReference type="InterPro" id="IPR029033">
    <property type="entry name" value="His_PPase_superfam"/>
</dbReference>
<dbReference type="InterPro" id="IPR013783">
    <property type="entry name" value="Ig-like_fold"/>
</dbReference>
<dbReference type="InterPro" id="IPR027417">
    <property type="entry name" value="P-loop_NTPase"/>
</dbReference>
<dbReference type="InterPro" id="IPR001345">
    <property type="entry name" value="PG/BPGM_mutase_AS"/>
</dbReference>
<dbReference type="PANTHER" id="PTHR10606:SF44">
    <property type="entry name" value="6-PHOSPHOFRUCTO 2-KINASE_FRUCTOSE 2,6-BISPHOSPHATASE LONG FORM"/>
    <property type="match status" value="1"/>
</dbReference>
<dbReference type="PANTHER" id="PTHR10606">
    <property type="entry name" value="6-PHOSPHOFRUCTO-2-KINASE/FRUCTOSE-2,6-BISPHOSPHATASE"/>
    <property type="match status" value="1"/>
</dbReference>
<dbReference type="Pfam" id="PF01591">
    <property type="entry name" value="6PF2K"/>
    <property type="match status" value="1"/>
</dbReference>
<dbReference type="Pfam" id="PF00300">
    <property type="entry name" value="His_Phos_1"/>
    <property type="match status" value="1"/>
</dbReference>
<dbReference type="PIRSF" id="PIRSF000709">
    <property type="entry name" value="6PFK_2-Ptase"/>
    <property type="match status" value="1"/>
</dbReference>
<dbReference type="PRINTS" id="PR00991">
    <property type="entry name" value="6PFRUCTKNASE"/>
</dbReference>
<dbReference type="SMART" id="SM01065">
    <property type="entry name" value="CBM_2"/>
    <property type="match status" value="1"/>
</dbReference>
<dbReference type="SMART" id="SM00855">
    <property type="entry name" value="PGAM"/>
    <property type="match status" value="1"/>
</dbReference>
<dbReference type="SUPFAM" id="SSF52540">
    <property type="entry name" value="P-loop containing nucleoside triphosphate hydrolases"/>
    <property type="match status" value="1"/>
</dbReference>
<dbReference type="SUPFAM" id="SSF53254">
    <property type="entry name" value="Phosphoglycerate mutase-like"/>
    <property type="match status" value="1"/>
</dbReference>
<dbReference type="SUPFAM" id="SSF49452">
    <property type="entry name" value="Starch-binding domain-like"/>
    <property type="match status" value="1"/>
</dbReference>
<dbReference type="PROSITE" id="PS51166">
    <property type="entry name" value="CBM20"/>
    <property type="match status" value="1"/>
</dbReference>
<dbReference type="PROSITE" id="PS00175">
    <property type="entry name" value="PG_MUTASE"/>
    <property type="match status" value="1"/>
</dbReference>
<name>F26_ARATH</name>
<protein>
    <recommendedName>
        <fullName>6-phosphofructo-2-kinase/fructose-2,6-bisphosphatase</fullName>
        <shortName>6PF-2-K/Fru-2,6-P2ase</shortName>
        <shortName>AtF2KP</shortName>
        <shortName>PFK/FBPase</shortName>
    </recommendedName>
    <domain>
        <recommendedName>
            <fullName>6-phosphofructo-2-kinase</fullName>
            <ecNumber>2.7.1.105</ecNumber>
        </recommendedName>
    </domain>
    <domain>
        <recommendedName>
            <fullName>Fructose-2,6-bisphosphatase</fullName>
            <ecNumber>3.1.3.46</ecNumber>
        </recommendedName>
    </domain>
</protein>
<sequence>MGSGASKNTEEDDDGSNGGGGQLYVSLKMENSKVEGELTPHVYGSLPLIGSWDPSKALPMQRESALMSELSFVVPPDHETLDFKFLLKPKNRNTPCIVEEGENRLLTGGSLQGDARLALFRLEGDVIVEFRVFINADRVSPIDLATSWRAYRENLQPSTVRGIPDVSINPDPKSAECPLESLELDLAHYEVPAPAPSANSYLVYAADNAENPRSLSASGSFRNDSTPKAAQRNSEDSGVTVDGSPSAKEMTIVVPDSSNIYSAFGEAESKSVETLSPFQQKDGQKGLFVDRGVGSPRLVKSLSASSFLIDTKQIKNSMPAAAGAVAAAAVADQMLGPKEDRHLAIVLVGLPARGKTFTAAKLTRYLRWLGHDTKHFNVGKYRRLKHGVNMSADFFRADNPEGVEARTEVAALAMEDMIAWMQEGGQVGIFDATNSTRVRRNMLMKMAEGKCKIIFLETLCNDERIIERNIRLKIQQSPDYSEEMDFEAGVRDFRDRLANYEKVYEPVEEGSYIKMIDMVSGNGGQIQVNNISGYLPGRIVFFLVNTHLTPRPILLTRHGESMDNVRGRIGGDSVISDSGKLYAKKLASFVEKRLKSEKAASIWTSTLQRTNLTASSIVGFPKVQWRALDEINAGVCDGMTYEEVKKNMPEEYESRKKDKLRYRYPRGESYLDVIQRLEPVIIELERQRAPVVVISHQAVLRALYAYFADRPLKEIPQIEMPLHTIIEIQMGVSGVQEKRYKLMD</sequence>
<reference key="1">
    <citation type="journal article" date="2000" name="Biochim. Biophys. Acta">
        <title>Structure and heterologous expression of a gene encoding fructose-6-phosphate,2-kinase/fructose-2,6-bisphosphatase from Arabidopsis thaliana.</title>
        <authorList>
            <person name="Villadsen D."/>
            <person name="Rung J.H."/>
            <person name="Draborg H."/>
            <person name="Nielsen T.H."/>
        </authorList>
    </citation>
    <scope>NUCLEOTIDE SEQUENCE [GENOMIC DNA / MRNA]</scope>
    <scope>FUNCTION</scope>
    <source>
        <strain>cv. Columbia</strain>
    </source>
</reference>
<reference key="2">
    <citation type="submission" date="1999-11" db="EMBL/GenBank/DDBJ databases">
        <title>cDNA cloning of the gene for Fructose-6-phosphate,2-kinase/Fructose-2,6-bisphosphatase from Arabidopsis.</title>
        <authorList>
            <person name="Furumoto T."/>
            <person name="Ito M."/>
            <person name="Akira W."/>
        </authorList>
    </citation>
    <scope>NUCLEOTIDE SEQUENCE [MRNA]</scope>
</reference>
<reference key="3">
    <citation type="journal article" date="2000" name="Nature">
        <title>Sequence and analysis of chromosome 1 of the plant Arabidopsis thaliana.</title>
        <authorList>
            <person name="Theologis A."/>
            <person name="Ecker J.R."/>
            <person name="Palm C.J."/>
            <person name="Federspiel N.A."/>
            <person name="Kaul S."/>
            <person name="White O."/>
            <person name="Alonso J."/>
            <person name="Altafi H."/>
            <person name="Araujo R."/>
            <person name="Bowman C.L."/>
            <person name="Brooks S.Y."/>
            <person name="Buehler E."/>
            <person name="Chan A."/>
            <person name="Chao Q."/>
            <person name="Chen H."/>
            <person name="Cheuk R.F."/>
            <person name="Chin C.W."/>
            <person name="Chung M.K."/>
            <person name="Conn L."/>
            <person name="Conway A.B."/>
            <person name="Conway A.R."/>
            <person name="Creasy T.H."/>
            <person name="Dewar K."/>
            <person name="Dunn P."/>
            <person name="Etgu P."/>
            <person name="Feldblyum T.V."/>
            <person name="Feng J.-D."/>
            <person name="Fong B."/>
            <person name="Fujii C.Y."/>
            <person name="Gill J.E."/>
            <person name="Goldsmith A.D."/>
            <person name="Haas B."/>
            <person name="Hansen N.F."/>
            <person name="Hughes B."/>
            <person name="Huizar L."/>
            <person name="Hunter J.L."/>
            <person name="Jenkins J."/>
            <person name="Johnson-Hopson C."/>
            <person name="Khan S."/>
            <person name="Khaykin E."/>
            <person name="Kim C.J."/>
            <person name="Koo H.L."/>
            <person name="Kremenetskaia I."/>
            <person name="Kurtz D.B."/>
            <person name="Kwan A."/>
            <person name="Lam B."/>
            <person name="Langin-Hooper S."/>
            <person name="Lee A."/>
            <person name="Lee J.M."/>
            <person name="Lenz C.A."/>
            <person name="Li J.H."/>
            <person name="Li Y.-P."/>
            <person name="Lin X."/>
            <person name="Liu S.X."/>
            <person name="Liu Z.A."/>
            <person name="Luros J.S."/>
            <person name="Maiti R."/>
            <person name="Marziali A."/>
            <person name="Militscher J."/>
            <person name="Miranda M."/>
            <person name="Nguyen M."/>
            <person name="Nierman W.C."/>
            <person name="Osborne B.I."/>
            <person name="Pai G."/>
            <person name="Peterson J."/>
            <person name="Pham P.K."/>
            <person name="Rizzo M."/>
            <person name="Rooney T."/>
            <person name="Rowley D."/>
            <person name="Sakano H."/>
            <person name="Salzberg S.L."/>
            <person name="Schwartz J.R."/>
            <person name="Shinn P."/>
            <person name="Southwick A.M."/>
            <person name="Sun H."/>
            <person name="Tallon L.J."/>
            <person name="Tambunga G."/>
            <person name="Toriumi M.J."/>
            <person name="Town C.D."/>
            <person name="Utterback T."/>
            <person name="Van Aken S."/>
            <person name="Vaysberg M."/>
            <person name="Vysotskaia V.S."/>
            <person name="Walker M."/>
            <person name="Wu D."/>
            <person name="Yu G."/>
            <person name="Fraser C.M."/>
            <person name="Venter J.C."/>
            <person name="Davis R.W."/>
        </authorList>
    </citation>
    <scope>NUCLEOTIDE SEQUENCE [LARGE SCALE GENOMIC DNA]</scope>
    <source>
        <strain>cv. Columbia</strain>
    </source>
</reference>
<reference key="4">
    <citation type="journal article" date="2017" name="Plant J.">
        <title>Araport11: a complete reannotation of the Arabidopsis thaliana reference genome.</title>
        <authorList>
            <person name="Cheng C.Y."/>
            <person name="Krishnakumar V."/>
            <person name="Chan A.P."/>
            <person name="Thibaud-Nissen F."/>
            <person name="Schobel S."/>
            <person name="Town C.D."/>
        </authorList>
    </citation>
    <scope>GENOME REANNOTATION</scope>
    <source>
        <strain>cv. Columbia</strain>
    </source>
</reference>
<reference key="5">
    <citation type="journal article" date="2003" name="Science">
        <title>Empirical analysis of transcriptional activity in the Arabidopsis genome.</title>
        <authorList>
            <person name="Yamada K."/>
            <person name="Lim J."/>
            <person name="Dale J.M."/>
            <person name="Chen H."/>
            <person name="Shinn P."/>
            <person name="Palm C.J."/>
            <person name="Southwick A.M."/>
            <person name="Wu H.C."/>
            <person name="Kim C.J."/>
            <person name="Nguyen M."/>
            <person name="Pham P.K."/>
            <person name="Cheuk R.F."/>
            <person name="Karlin-Newmann G."/>
            <person name="Liu S.X."/>
            <person name="Lam B."/>
            <person name="Sakano H."/>
            <person name="Wu T."/>
            <person name="Yu G."/>
            <person name="Miranda M."/>
            <person name="Quach H.L."/>
            <person name="Tripp M."/>
            <person name="Chang C.H."/>
            <person name="Lee J.M."/>
            <person name="Toriumi M.J."/>
            <person name="Chan M.M."/>
            <person name="Tang C.C."/>
            <person name="Onodera C.S."/>
            <person name="Deng J.M."/>
            <person name="Akiyama K."/>
            <person name="Ansari Y."/>
            <person name="Arakawa T."/>
            <person name="Banh J."/>
            <person name="Banno F."/>
            <person name="Bowser L."/>
            <person name="Brooks S.Y."/>
            <person name="Carninci P."/>
            <person name="Chao Q."/>
            <person name="Choy N."/>
            <person name="Enju A."/>
            <person name="Goldsmith A.D."/>
            <person name="Gurjal M."/>
            <person name="Hansen N.F."/>
            <person name="Hayashizaki Y."/>
            <person name="Johnson-Hopson C."/>
            <person name="Hsuan V.W."/>
            <person name="Iida K."/>
            <person name="Karnes M."/>
            <person name="Khan S."/>
            <person name="Koesema E."/>
            <person name="Ishida J."/>
            <person name="Jiang P.X."/>
            <person name="Jones T."/>
            <person name="Kawai J."/>
            <person name="Kamiya A."/>
            <person name="Meyers C."/>
            <person name="Nakajima M."/>
            <person name="Narusaka M."/>
            <person name="Seki M."/>
            <person name="Sakurai T."/>
            <person name="Satou M."/>
            <person name="Tamse R."/>
            <person name="Vaysberg M."/>
            <person name="Wallender E.K."/>
            <person name="Wong C."/>
            <person name="Yamamura Y."/>
            <person name="Yuan S."/>
            <person name="Shinozaki K."/>
            <person name="Davis R.W."/>
            <person name="Theologis A."/>
            <person name="Ecker J.R."/>
        </authorList>
    </citation>
    <scope>NUCLEOTIDE SEQUENCE [LARGE SCALE MRNA] OF 355-744</scope>
    <source>
        <strain>cv. Columbia</strain>
    </source>
</reference>
<reference key="6">
    <citation type="journal article" date="2001" name="Biochem. J.">
        <title>N-terminal truncation affects the kinetics and structure of fructose-6-phosphate 2-kinase/fructose-2,6-bisphosphatase from Arabidopsis thaliana.</title>
        <authorList>
            <person name="Villadsen D."/>
            <person name="Nielsen T.H."/>
        </authorList>
    </citation>
    <scope>CATALYTIC ACTIVITY</scope>
    <scope>ACTIVITY REGULATION</scope>
    <scope>BIOPHYSICOCHEMICAL PROPERTIES</scope>
</reference>
<reference key="7">
    <citation type="journal article" date="2001" name="Plant Physiol.">
        <title>Transgenic Arabidopsis plants with decreased activity of fructose-6-phosphate,2-kinase/fructose-2,6-bisphosphatase have altered carbon partitioning.</title>
        <authorList>
            <person name="Draborg H."/>
            <person name="Villadsen D."/>
            <person name="Nielsen T.H."/>
        </authorList>
    </citation>
    <scope>FUNCTION IN CARBON PARTITIONING</scope>
</reference>
<reference key="8">
    <citation type="journal article" date="2003" name="J. Biol. Chem.">
        <title>Unexpected protein families including cell defense components feature in the N-myristoylome of a higher eukaryote.</title>
        <authorList>
            <person name="Boisson B."/>
            <person name="Giglione C."/>
            <person name="Meinnel T."/>
        </authorList>
    </citation>
    <scope>MYRISTOYLATION AT GLY-2</scope>
</reference>
<reference key="9">
    <citation type="journal article" date="2004" name="Plant J.">
        <title>Phosphorylation and 14-3-3 binding of Arabidopsis 6-phosphofructo-2-kinase/fructose-2,6-bisphosphatase.</title>
        <authorList>
            <person name="Kulma A."/>
            <person name="Villadsen D."/>
            <person name="Campbell D.G."/>
            <person name="Meek S.E.M."/>
            <person name="Harthill J.E."/>
            <person name="Nielsen T.H."/>
            <person name="MacKintosh C."/>
        </authorList>
    </citation>
    <scope>FUNCTION</scope>
    <scope>PHOSPHORYLATION AT SER-220 AND SER-303 BY CPK3</scope>
    <scope>INTERACTION WITH 14-3-3 PROTEINS</scope>
</reference>
<reference key="10">
    <citation type="journal article" date="2008" name="J. Proteome Res.">
        <title>Site-specific phosphorylation profiling of Arabidopsis proteins by mass spectrometry and peptide chip analysis.</title>
        <authorList>
            <person name="de la Fuente van Bentem S."/>
            <person name="Anrather D."/>
            <person name="Dohnal I."/>
            <person name="Roitinger E."/>
            <person name="Csaszar E."/>
            <person name="Joore J."/>
            <person name="Buijnink J."/>
            <person name="Carreri A."/>
            <person name="Forzani C."/>
            <person name="Lorkovic Z.J."/>
            <person name="Barta A."/>
            <person name="Lecourieux D."/>
            <person name="Verhounig A."/>
            <person name="Jonak C."/>
            <person name="Hirt H."/>
        </authorList>
    </citation>
    <scope>SUBCELLULAR LOCATION</scope>
    <scope>PHOSPHORYLATION [LARGE SCALE ANALYSIS] AT SER-303</scope>
    <scope>IDENTIFICATION BY MASS SPECTROMETRY [LARGE SCALE ANALYSIS]</scope>
    <source>
        <tissue>Root</tissue>
    </source>
</reference>
<reference key="11">
    <citation type="journal article" date="2009" name="J. Proteomics">
        <title>Phosphoproteomic analysis of nuclei-enriched fractions from Arabidopsis thaliana.</title>
        <authorList>
            <person name="Jones A.M.E."/>
            <person name="MacLean D."/>
            <person name="Studholme D.J."/>
            <person name="Serna-Sanz A."/>
            <person name="Andreasson E."/>
            <person name="Rathjen J.P."/>
            <person name="Peck S.C."/>
        </authorList>
    </citation>
    <scope>IDENTIFICATION BY MASS SPECTROMETRY [LARGE SCALE ANALYSIS]</scope>
    <source>
        <strain>cv. Columbia</strain>
    </source>
</reference>
<reference key="12">
    <citation type="journal article" date="2009" name="Plant Physiol.">
        <title>Large-scale Arabidopsis phosphoproteome profiling reveals novel chloroplast kinase substrates and phosphorylation networks.</title>
        <authorList>
            <person name="Reiland S."/>
            <person name="Messerli G."/>
            <person name="Baerenfaller K."/>
            <person name="Gerrits B."/>
            <person name="Endler A."/>
            <person name="Grossmann J."/>
            <person name="Gruissem W."/>
            <person name="Baginsky S."/>
        </authorList>
    </citation>
    <scope>PHOSPHORYLATION [LARGE SCALE ANALYSIS] AT SER-220; SER-276 AND SER-295</scope>
    <scope>IDENTIFICATION BY MASS SPECTROMETRY [LARGE SCALE ANALYSIS]</scope>
</reference>
<feature type="initiator methionine" description="Removed">
    <location>
        <position position="1"/>
    </location>
</feature>
<feature type="chain" id="PRO_0000415319" description="6-phosphofructo-2-kinase/fructose-2,6-bisphosphatase">
    <location>
        <begin position="2"/>
        <end position="744"/>
    </location>
</feature>
<feature type="domain" description="CBM20" evidence="4">
    <location>
        <begin position="17"/>
        <end position="122"/>
    </location>
</feature>
<feature type="region of interest" description="Disordered" evidence="5">
    <location>
        <begin position="1"/>
        <end position="23"/>
    </location>
</feature>
<feature type="region of interest" description="Disordered" evidence="5">
    <location>
        <begin position="213"/>
        <end position="245"/>
    </location>
</feature>
<feature type="region of interest" description="6-phosphofructo-2-kinase">
    <location>
        <begin position="301"/>
        <end position="549"/>
    </location>
</feature>
<feature type="region of interest" description="Fructose-2,6-bisphosphatase">
    <location>
        <begin position="550"/>
        <end position="744"/>
    </location>
</feature>
<feature type="compositionally biased region" description="Polar residues" evidence="5">
    <location>
        <begin position="213"/>
        <end position="232"/>
    </location>
</feature>
<feature type="active site" evidence="3">
    <location>
        <position position="431"/>
    </location>
</feature>
<feature type="active site" evidence="3">
    <location>
        <position position="460"/>
    </location>
</feature>
<feature type="active site" description="Tele-phosphohistidine intermediate" evidence="2">
    <location>
        <position position="558"/>
    </location>
</feature>
<feature type="active site" description="Proton donor/acceptor" evidence="2">
    <location>
        <position position="630"/>
    </location>
</feature>
<feature type="binding site" evidence="2">
    <location>
        <begin position="349"/>
        <end position="357"/>
    </location>
    <ligand>
        <name>ATP</name>
        <dbReference type="ChEBI" id="CHEBI:30616"/>
    </ligand>
</feature>
<feature type="binding site" evidence="2">
    <location>
        <position position="382"/>
    </location>
    <ligand>
        <name>beta-D-fructose 6-phosphate</name>
        <dbReference type="ChEBI" id="CHEBI:57634"/>
    </ligand>
</feature>
<feature type="binding site" evidence="2">
    <location>
        <position position="406"/>
    </location>
    <ligand>
        <name>beta-D-fructose 6-phosphate</name>
        <dbReference type="ChEBI" id="CHEBI:57634"/>
    </ligand>
</feature>
<feature type="binding site" evidence="2">
    <location>
        <position position="433"/>
    </location>
    <ligand>
        <name>beta-D-fructose 6-phosphate</name>
        <dbReference type="ChEBI" id="CHEBI:57634"/>
    </ligand>
</feature>
<feature type="binding site" evidence="2">
    <location>
        <position position="439"/>
    </location>
    <ligand>
        <name>beta-D-fructose 6-phosphate</name>
        <dbReference type="ChEBI" id="CHEBI:57634"/>
    </ligand>
</feature>
<feature type="binding site" evidence="2">
    <location>
        <begin position="469"/>
        <end position="474"/>
    </location>
    <ligand>
        <name>ATP</name>
        <dbReference type="ChEBI" id="CHEBI:30616"/>
    </ligand>
</feature>
<feature type="binding site" evidence="2">
    <location>
        <position position="496"/>
    </location>
    <ligand>
        <name>beta-D-fructose 6-phosphate</name>
        <dbReference type="ChEBI" id="CHEBI:57634"/>
    </ligand>
</feature>
<feature type="binding site" evidence="2">
    <location>
        <position position="500"/>
    </location>
    <ligand>
        <name>beta-D-fructose 6-phosphate</name>
        <dbReference type="ChEBI" id="CHEBI:57634"/>
    </ligand>
</feature>
<feature type="binding site" evidence="2">
    <location>
        <position position="557"/>
    </location>
    <ligand>
        <name>beta-D-fructose 2,6-bisphosphate</name>
        <dbReference type="ChEBI" id="CHEBI:58579"/>
    </ligand>
</feature>
<feature type="binding site" evidence="2">
    <location>
        <position position="564"/>
    </location>
    <ligand>
        <name>beta-D-fructose 2,6-bisphosphate</name>
        <dbReference type="ChEBI" id="CHEBI:58579"/>
    </ligand>
</feature>
<feature type="binding site" evidence="2">
    <location>
        <position position="570"/>
    </location>
    <ligand>
        <name>beta-D-fructose 2,6-bisphosphate</name>
        <dbReference type="ChEBI" id="CHEBI:58579"/>
    </ligand>
</feature>
<feature type="binding site" evidence="2">
    <location>
        <position position="641"/>
    </location>
    <ligand>
        <name>beta-D-fructose 2,6-bisphosphate</name>
        <dbReference type="ChEBI" id="CHEBI:58579"/>
    </ligand>
</feature>
<feature type="binding site" evidence="1">
    <location>
        <begin position="652"/>
        <end position="655"/>
    </location>
    <ligand>
        <name>ATP</name>
        <dbReference type="ChEBI" id="CHEBI:30616"/>
    </ligand>
</feature>
<feature type="binding site" evidence="2">
    <location>
        <position position="655"/>
    </location>
    <ligand>
        <name>beta-D-fructose 2,6-bisphosphate</name>
        <dbReference type="ChEBI" id="CHEBI:58579"/>
    </ligand>
</feature>
<feature type="binding site" evidence="2">
    <location>
        <position position="659"/>
    </location>
    <ligand>
        <name>beta-D-fructose 2,6-bisphosphate</name>
        <dbReference type="ChEBI" id="CHEBI:58579"/>
    </ligand>
</feature>
<feature type="binding site" evidence="2">
    <location>
        <position position="670"/>
    </location>
    <ligand>
        <name>beta-D-fructose 2,6-bisphosphate</name>
        <dbReference type="ChEBI" id="CHEBI:58579"/>
    </ligand>
</feature>
<feature type="binding site" evidence="1">
    <location>
        <begin position="697"/>
        <end position="701"/>
    </location>
    <ligand>
        <name>ATP</name>
        <dbReference type="ChEBI" id="CHEBI:30616"/>
    </ligand>
</feature>
<feature type="binding site" evidence="2">
    <location>
        <position position="697"/>
    </location>
    <ligand>
        <name>beta-D-fructose 2,6-bisphosphate</name>
        <dbReference type="ChEBI" id="CHEBI:58579"/>
    </ligand>
</feature>
<feature type="binding site" evidence="1">
    <location>
        <position position="701"/>
    </location>
    <ligand>
        <name>beta-D-fructose 2,6-bisphosphate</name>
        <dbReference type="ChEBI" id="CHEBI:58579"/>
    </ligand>
</feature>
<feature type="site" description="Transition state stabilizer" evidence="2">
    <location>
        <position position="557"/>
    </location>
</feature>
<feature type="site" description="Transition state stabilizer" evidence="2">
    <location>
        <position position="564"/>
    </location>
</feature>
<feature type="site" description="Transition state stabilizer" evidence="2">
    <location>
        <position position="696"/>
    </location>
</feature>
<feature type="modified residue" description="Phosphoserine; by CPK3" evidence="10 14">
    <location>
        <position position="220"/>
    </location>
</feature>
<feature type="modified residue" description="Phosphoserine" evidence="14">
    <location>
        <position position="276"/>
    </location>
</feature>
<feature type="modified residue" description="Phosphoserine" evidence="14">
    <location>
        <position position="295"/>
    </location>
</feature>
<feature type="modified residue" description="Phosphoserine; by CPK3" evidence="10 13">
    <location>
        <position position="303"/>
    </location>
</feature>
<feature type="lipid moiety-binding region" description="N-myristoyl glycine" evidence="9">
    <location>
        <position position="2"/>
    </location>
</feature>
<feature type="sequence conflict" description="In Ref. 1; AAF04293." evidence="12" ref="1">
    <original>D</original>
    <variation>A</variation>
    <location>
        <position position="629"/>
    </location>
</feature>
<accession>Q9MB58</accession>
<accession>Q8L7N6</accession>
<accession>Q9LL39</accession>
<accession>Q9LMK3</accession>
<accession>Q9SP17</accession>
<evidence type="ECO:0000250" key="1">
    <source>
        <dbReference type="UniProtKB" id="P07953"/>
    </source>
</evidence>
<evidence type="ECO:0000250" key="2">
    <source>
        <dbReference type="UniProtKB" id="Q16875"/>
    </source>
</evidence>
<evidence type="ECO:0000255" key="3"/>
<evidence type="ECO:0000255" key="4">
    <source>
        <dbReference type="PROSITE-ProRule" id="PRU00594"/>
    </source>
</evidence>
<evidence type="ECO:0000256" key="5">
    <source>
        <dbReference type="SAM" id="MobiDB-lite"/>
    </source>
</evidence>
<evidence type="ECO:0000269" key="6">
    <source>
    </source>
</evidence>
<evidence type="ECO:0000269" key="7">
    <source>
    </source>
</evidence>
<evidence type="ECO:0000269" key="8">
    <source>
    </source>
</evidence>
<evidence type="ECO:0000269" key="9">
    <source>
    </source>
</evidence>
<evidence type="ECO:0000269" key="10">
    <source>
    </source>
</evidence>
<evidence type="ECO:0000269" key="11">
    <source>
    </source>
</evidence>
<evidence type="ECO:0000305" key="12"/>
<evidence type="ECO:0007744" key="13">
    <source>
    </source>
</evidence>
<evidence type="ECO:0007744" key="14">
    <source>
    </source>
</evidence>
<organism>
    <name type="scientific">Arabidopsis thaliana</name>
    <name type="common">Mouse-ear cress</name>
    <dbReference type="NCBI Taxonomy" id="3702"/>
    <lineage>
        <taxon>Eukaryota</taxon>
        <taxon>Viridiplantae</taxon>
        <taxon>Streptophyta</taxon>
        <taxon>Embryophyta</taxon>
        <taxon>Tracheophyta</taxon>
        <taxon>Spermatophyta</taxon>
        <taxon>Magnoliopsida</taxon>
        <taxon>eudicotyledons</taxon>
        <taxon>Gunneridae</taxon>
        <taxon>Pentapetalae</taxon>
        <taxon>rosids</taxon>
        <taxon>malvids</taxon>
        <taxon>Brassicales</taxon>
        <taxon>Brassicaceae</taxon>
        <taxon>Camelineae</taxon>
        <taxon>Arabidopsis</taxon>
    </lineage>
</organism>
<comment type="function">
    <text evidence="6 7 10">Synthesis and degradation of fructose 2,6-bisphosphate. Regulates carbon partitioning between sucrose versus starch during the diurnal cycle.</text>
</comment>
<comment type="catalytic activity">
    <reaction evidence="8">
        <text>beta-D-fructose 2,6-bisphosphate + H2O = beta-D-fructose 6-phosphate + phosphate</text>
        <dbReference type="Rhea" id="RHEA:17289"/>
        <dbReference type="ChEBI" id="CHEBI:15377"/>
        <dbReference type="ChEBI" id="CHEBI:43474"/>
        <dbReference type="ChEBI" id="CHEBI:57634"/>
        <dbReference type="ChEBI" id="CHEBI:58579"/>
        <dbReference type="EC" id="3.1.3.46"/>
    </reaction>
</comment>
<comment type="catalytic activity">
    <reaction evidence="8">
        <text>beta-D-fructose 6-phosphate + ATP = beta-D-fructose 2,6-bisphosphate + ADP + H(+)</text>
        <dbReference type="Rhea" id="RHEA:15653"/>
        <dbReference type="ChEBI" id="CHEBI:15378"/>
        <dbReference type="ChEBI" id="CHEBI:30616"/>
        <dbReference type="ChEBI" id="CHEBI:57634"/>
        <dbReference type="ChEBI" id="CHEBI:58579"/>
        <dbReference type="ChEBI" id="CHEBI:456216"/>
        <dbReference type="EC" id="2.7.1.105"/>
    </reaction>
</comment>
<comment type="activity regulation">
    <text evidence="8">6-phosphofructo-2-kinase activity is activated by pyruvate. 6-phosphofructo-2-kinase activity is inhibited by PPi, phosphoenolpyruvate and 2-phosphoglycerate. Fructose-2,6-bisphosphatase activity is inhibited by pyruvate, fructose 1,6-bisphosphate and 6-phosphogluconate.</text>
</comment>
<comment type="biophysicochemical properties">
    <kinetics>
        <KM evidence="8">0.5 mM for fructose-6-phosphate for the 6-phosphofructo-2-kinase activity (at pH 6.0 and 25 degrees Celsius)</KM>
        <KM evidence="8">0.19 mM for ATP for the 6-phosphofructo-2-kinase activity (at pH 6.0 and 25 degrees Celsius)</KM>
        <KM evidence="8">0.028 mM for fructose-2,6-bisphosphate for the fructose-2,6-bisphosphatase activity (at pH 6.0 and 25 degrees Celsius)</KM>
        <Vmax evidence="8">180.0 nmol/min/mg enzyme with fructose-6-phosphate as substrate for the 6-phosphofructo-2-kinase activity (at pH 6.0 and 25 degrees Celsius)</Vmax>
        <Vmax evidence="8">270.0 nmol/min/mg enzyme with fructose-2,6-bisphosphate as substrate for the fructose-2,6-bisphosphatase activity (at pH 6.0 and 25 degrees Celsius)</Vmax>
    </kinetics>
    <temperatureDependence>
        <text evidence="8">Inactivated by mild heat treatment (42 degrees Celsius during 10 minutes).</text>
    </temperatureDependence>
</comment>
<comment type="subunit">
    <text evidence="10">Interacts with 14-3-3 proteins; these interactions may regulate both nitrate assimilation and sucrose/starch partitioning in leaves during the diurnal cycle.</text>
</comment>
<comment type="subcellular location">
    <subcellularLocation>
        <location evidence="11">Membrane</location>
        <topology evidence="11">Lipid-anchor</topology>
        <orientation evidence="11">Cytoplasmic side</orientation>
    </subcellularLocation>
    <subcellularLocation>
        <location evidence="11">Cytoplasm</location>
    </subcellularLocation>
</comment>
<comment type="PTM">
    <text evidence="10">Phosphorylation at Ser-220 and Ser-303 by CPK3 promotes 14-3-3 proteins binding.</text>
</comment>
<comment type="similarity">
    <text evidence="12">In the C-terminal section; belongs to the phosphoglycerate mutase family.</text>
</comment>
<comment type="sequence caution" evidence="12">
    <conflict type="frameshift">
        <sequence resource="EMBL-CDS" id="AAF76986"/>
    </conflict>
</comment>
<comment type="sequence caution" evidence="12">
    <conflict type="erroneous gene model prediction">
        <sequence resource="EMBL-CDS" id="AAF82210"/>
    </conflict>
</comment>
<keyword id="KW-0067">ATP-binding</keyword>
<keyword id="KW-0119">Carbohydrate metabolism</keyword>
<keyword id="KW-0963">Cytoplasm</keyword>
<keyword id="KW-0378">Hydrolase</keyword>
<keyword id="KW-0418">Kinase</keyword>
<keyword id="KW-0449">Lipoprotein</keyword>
<keyword id="KW-0472">Membrane</keyword>
<keyword id="KW-0511">Multifunctional enzyme</keyword>
<keyword id="KW-0519">Myristate</keyword>
<keyword id="KW-0547">Nucleotide-binding</keyword>
<keyword id="KW-0597">Phosphoprotein</keyword>
<keyword id="KW-1185">Reference proteome</keyword>
<keyword id="KW-0808">Transferase</keyword>
<proteinExistence type="evidence at protein level"/>
<gene>
    <name type="primary">FKFBP</name>
    <name type="synonym">F2KP</name>
    <name type="ordered locus">At1g07110</name>
    <name type="ORF">F10K1.19</name>
</gene>